<proteinExistence type="evidence at protein level"/>
<reference key="1">
    <citation type="journal article" date="2018" name="BMC Genomics">
        <title>A manually annotated Actinidia chinensis var. chinensis (kiwifruit) genome highlights the challenges associated with draft genomes and gene prediction in plants.</title>
        <authorList>
            <person name="Pilkington S.M."/>
            <person name="Crowhurst R."/>
            <person name="Hilario E."/>
            <person name="Nardozza S."/>
            <person name="Fraser L."/>
            <person name="Peng Y."/>
            <person name="Gunaseelan K."/>
            <person name="Simpson R."/>
            <person name="Tahir J."/>
            <person name="Deroles S.C."/>
            <person name="Templeton K."/>
            <person name="Luo Z."/>
            <person name="Davy M."/>
            <person name="Cheng C."/>
            <person name="McNeilage M."/>
            <person name="Scaglione D."/>
            <person name="Liu Y."/>
            <person name="Zhang Q."/>
            <person name="Datson P."/>
            <person name="De Silva N."/>
            <person name="Gardiner S.E."/>
            <person name="Bassett H."/>
            <person name="Chagne D."/>
            <person name="McCallum J."/>
            <person name="Dzierzon H."/>
            <person name="Deng C."/>
            <person name="Wang Y.Y."/>
            <person name="Barron L."/>
            <person name="Manako K."/>
            <person name="Bowen J."/>
            <person name="Foster T.M."/>
            <person name="Erridge Z.A."/>
            <person name="Tiffin H."/>
            <person name="Waite C.N."/>
            <person name="Davies K.M."/>
            <person name="Grierson E.P."/>
            <person name="Laing W.A."/>
            <person name="Kirk R."/>
            <person name="Chen X."/>
            <person name="Wood M."/>
            <person name="Montefiori M."/>
            <person name="Brummell D.A."/>
            <person name="Schwinn K.E."/>
            <person name="Catanach A."/>
            <person name="Fullerton C."/>
            <person name="Li D."/>
            <person name="Meiyalaghan S."/>
            <person name="Nieuwenhuizen N."/>
            <person name="Read N."/>
            <person name="Prakash R."/>
            <person name="Hunter D."/>
            <person name="Zhang H."/>
            <person name="McKenzie M."/>
            <person name="Knabel M."/>
            <person name="Harris A."/>
            <person name="Allan A.C."/>
            <person name="Gleave A."/>
            <person name="Chen A."/>
            <person name="Janssen B.J."/>
            <person name="Plunkett B."/>
            <person name="Ampomah-Dwamena C."/>
            <person name="Voogd C."/>
            <person name="Leif D."/>
            <person name="Lafferty D."/>
            <person name="Souleyre E.J.F."/>
            <person name="Varkonyi-Gasic E."/>
            <person name="Gambi F."/>
            <person name="Hanley J."/>
            <person name="Yao J.L."/>
            <person name="Cheung J."/>
            <person name="David K.M."/>
            <person name="Warren B."/>
            <person name="Marsh K."/>
            <person name="Snowden K.C."/>
            <person name="Lin-Wang K."/>
            <person name="Brian L."/>
            <person name="Martinez-Sanchez M."/>
            <person name="Wang M."/>
            <person name="Ileperuma N."/>
            <person name="Macnee N."/>
            <person name="Campin R."/>
            <person name="McAtee P."/>
            <person name="Drummond R.S.M."/>
            <person name="Espley R.V."/>
            <person name="Ireland H.S."/>
            <person name="Wu R."/>
            <person name="Atkinson R.G."/>
            <person name="Karunairetnam S."/>
            <person name="Bulley S."/>
            <person name="Chunkath S."/>
            <person name="Hanley Z."/>
            <person name="Storey R."/>
            <person name="Thrimawithana A.H."/>
            <person name="Thomson S."/>
            <person name="David C."/>
            <person name="Testolin R."/>
            <person name="Huang H."/>
            <person name="Hellens R.P."/>
            <person name="Schaffer R.J."/>
        </authorList>
    </citation>
    <scope>NUCLEOTIDE SEQUENCE [LARGE SCALE GENOMIC DNA]</scope>
    <source>
        <strain>cv. Red5</strain>
    </source>
</reference>
<reference key="2">
    <citation type="journal article" date="2011" name="PLoS ONE">
        <title>Allergenic lipid transfer proteins from plant-derived foods do not immunologically and clinically behave homogeneously: the kiwifruit LTP as a model.</title>
        <authorList>
            <person name="Bernardi M.L."/>
            <person name="Giangrieco I."/>
            <person name="Camardella L."/>
            <person name="Ferrara R."/>
            <person name="Palazzo P."/>
            <person name="Panico M.R."/>
            <person name="Crescenzo R."/>
            <person name="Carratore V."/>
            <person name="Zennaro D."/>
            <person name="Liso M."/>
            <person name="Santoro M."/>
            <person name="Zuzzi S."/>
            <person name="Tamburrini M."/>
            <person name="Ciardiello M.A."/>
            <person name="Mari A."/>
        </authorList>
    </citation>
    <scope>PROTEIN SEQUENCE OF 26-40</scope>
    <scope>TISSUE SPECIFICITY</scope>
    <scope>ALLERGENICITY</scope>
    <source>
        <tissue evidence="2">Seed</tissue>
    </source>
</reference>
<gene>
    <name evidence="4" type="primary">NLTP1</name>
    <name evidence="5" type="ORF">CEY00_Acc30713</name>
</gene>
<name>NLTP1_ACTCC</name>
<sequence>MIKGLAITVVAVLAVVQLLARPSDAAVSCGQVDTSLTPCLTYLTKGGTPSTQCCSGVRSLKSMTGTKADRQAACNCLKQAAARYQGIKDAAAAALSQKCGVQLSVPISRKTDCS</sequence>
<comment type="function">
    <text evidence="1">Plant non-specific lipid-transfer proteins transfer phospholipids as well as galactolipids across membranes. May play a role in wax or cutin deposition in the cell walls of expanding epidermal cells and certain secretory tissues (By similarity).</text>
</comment>
<comment type="tissue specificity">
    <text evidence="2">Expressed in seeds and, at very low levels, in pulp of fruit (at protein level).</text>
</comment>
<comment type="allergen">
    <text evidence="2">Causes an allergic reaction in human. Binds to IgE.</text>
</comment>
<comment type="similarity">
    <text evidence="4">Belongs to the plant LTP family.</text>
</comment>
<keyword id="KW-0002">3D-structure</keyword>
<keyword id="KW-0020">Allergen</keyword>
<keyword id="KW-0903">Direct protein sequencing</keyword>
<keyword id="KW-1015">Disulfide bond</keyword>
<keyword id="KW-0446">Lipid-binding</keyword>
<keyword id="KW-1185">Reference proteome</keyword>
<keyword id="KW-0732">Signal</keyword>
<keyword id="KW-0813">Transport</keyword>
<feature type="signal peptide" evidence="2">
    <location>
        <begin position="1"/>
        <end position="25"/>
    </location>
</feature>
<feature type="chain" id="PRO_0000415602" description="Non-specific lipid-transfer protein 1">
    <location>
        <begin position="26"/>
        <end position="114"/>
    </location>
</feature>
<feature type="disulfide bond" evidence="1">
    <location>
        <begin position="29"/>
        <end position="76"/>
    </location>
</feature>
<feature type="disulfide bond" evidence="1">
    <location>
        <begin position="39"/>
        <end position="53"/>
    </location>
</feature>
<feature type="disulfide bond" evidence="1">
    <location>
        <begin position="54"/>
        <end position="99"/>
    </location>
</feature>
<feature type="disulfide bond" evidence="1">
    <location>
        <begin position="74"/>
        <end position="113"/>
    </location>
</feature>
<feature type="sequence conflict" description="In Ref. 2; AA sequence." evidence="4" ref="2">
    <original>S</original>
    <variation>A</variation>
    <location>
        <position position="35"/>
    </location>
</feature>
<feature type="helix" evidence="6">
    <location>
        <begin position="29"/>
        <end position="35"/>
    </location>
</feature>
<feature type="helix" evidence="6">
    <location>
        <begin position="37"/>
        <end position="39"/>
    </location>
</feature>
<feature type="helix" evidence="6">
    <location>
        <begin position="40"/>
        <end position="45"/>
    </location>
</feature>
<feature type="helix" evidence="6">
    <location>
        <begin position="51"/>
        <end position="63"/>
    </location>
</feature>
<feature type="helix" evidence="6">
    <location>
        <begin position="67"/>
        <end position="83"/>
    </location>
</feature>
<feature type="helix" evidence="6">
    <location>
        <begin position="89"/>
        <end position="98"/>
    </location>
</feature>
<accession>P85204</accession>
<accession>A0A2R6PA47</accession>
<protein>
    <recommendedName>
        <fullName evidence="3">Non-specific lipid-transfer protein 1</fullName>
        <shortName evidence="3">LTP1</shortName>
    </recommendedName>
    <allergenName evidence="3">Act c 10</allergenName>
</protein>
<evidence type="ECO:0000250" key="1">
    <source>
        <dbReference type="UniProtKB" id="Q42952"/>
    </source>
</evidence>
<evidence type="ECO:0000269" key="2">
    <source>
    </source>
</evidence>
<evidence type="ECO:0000303" key="3">
    <source>
    </source>
</evidence>
<evidence type="ECO:0000305" key="4"/>
<evidence type="ECO:0000312" key="5">
    <source>
        <dbReference type="EMBL" id="PSR87667.1"/>
    </source>
</evidence>
<evidence type="ECO:0007829" key="6">
    <source>
        <dbReference type="PDB" id="7KSB"/>
    </source>
</evidence>
<dbReference type="EMBL" id="NKQK01000027">
    <property type="protein sequence ID" value="PSR87667.1"/>
    <property type="molecule type" value="Genomic_DNA"/>
</dbReference>
<dbReference type="PDB" id="7KSB">
    <property type="method" value="X-ray"/>
    <property type="resolution" value="1.95 A"/>
    <property type="chains" value="A/B=26-114"/>
</dbReference>
<dbReference type="PDBsum" id="7KSB"/>
<dbReference type="SMR" id="P85204"/>
<dbReference type="FunCoup" id="P85204">
    <property type="interactions" value="7"/>
</dbReference>
<dbReference type="STRING" id="1590841.P85204"/>
<dbReference type="Allergome" id="5735">
    <property type="allergen name" value="Act c 10"/>
</dbReference>
<dbReference type="Allergome" id="5736">
    <property type="allergen name" value="Act c 10.0101"/>
</dbReference>
<dbReference type="EnsemblPlants" id="PSR87667">
    <property type="protein sequence ID" value="PSR87667"/>
    <property type="gene ID" value="CEY00_Acc30713"/>
</dbReference>
<dbReference type="Gramene" id="PSR87667">
    <property type="protein sequence ID" value="PSR87667"/>
    <property type="gene ID" value="CEY00_Acc30713"/>
</dbReference>
<dbReference type="InParanoid" id="P85204"/>
<dbReference type="OMA" id="KRTACIC"/>
<dbReference type="OrthoDB" id="649864at2759"/>
<dbReference type="Proteomes" id="UP000241394">
    <property type="component" value="Chromosome LG27"/>
</dbReference>
<dbReference type="GO" id="GO:0008289">
    <property type="term" value="F:lipid binding"/>
    <property type="evidence" value="ECO:0007669"/>
    <property type="project" value="UniProtKB-KW"/>
</dbReference>
<dbReference type="GO" id="GO:0006869">
    <property type="term" value="P:lipid transport"/>
    <property type="evidence" value="ECO:0007669"/>
    <property type="project" value="InterPro"/>
</dbReference>
<dbReference type="CDD" id="cd01960">
    <property type="entry name" value="nsLTP1"/>
    <property type="match status" value="1"/>
</dbReference>
<dbReference type="Gene3D" id="1.10.110.10">
    <property type="entry name" value="Plant lipid-transfer and hydrophobic proteins"/>
    <property type="match status" value="1"/>
</dbReference>
<dbReference type="InterPro" id="IPR036312">
    <property type="entry name" value="Bifun_inhib/LTP/seed_sf"/>
</dbReference>
<dbReference type="InterPro" id="IPR016140">
    <property type="entry name" value="Bifunc_inhib/LTP/seed_store"/>
</dbReference>
<dbReference type="InterPro" id="IPR000528">
    <property type="entry name" value="Plant_nsLTP"/>
</dbReference>
<dbReference type="PANTHER" id="PTHR33076">
    <property type="entry name" value="NON-SPECIFIC LIPID-TRANSFER PROTEIN 2-RELATED"/>
    <property type="match status" value="1"/>
</dbReference>
<dbReference type="Pfam" id="PF00234">
    <property type="entry name" value="Tryp_alpha_amyl"/>
    <property type="match status" value="1"/>
</dbReference>
<dbReference type="PRINTS" id="PR00382">
    <property type="entry name" value="LIPIDTRNSFER"/>
</dbReference>
<dbReference type="SMART" id="SM00499">
    <property type="entry name" value="AAI"/>
    <property type="match status" value="1"/>
</dbReference>
<dbReference type="SUPFAM" id="SSF47699">
    <property type="entry name" value="Bifunctional inhibitor/lipid-transfer protein/seed storage 2S albumin"/>
    <property type="match status" value="1"/>
</dbReference>
<organism>
    <name type="scientific">Actinidia chinensis var. chinensis</name>
    <name type="common">Chinese soft-hair kiwi</name>
    <dbReference type="NCBI Taxonomy" id="1590841"/>
    <lineage>
        <taxon>Eukaryota</taxon>
        <taxon>Viridiplantae</taxon>
        <taxon>Streptophyta</taxon>
        <taxon>Embryophyta</taxon>
        <taxon>Tracheophyta</taxon>
        <taxon>Spermatophyta</taxon>
        <taxon>Magnoliopsida</taxon>
        <taxon>eudicotyledons</taxon>
        <taxon>Gunneridae</taxon>
        <taxon>Pentapetalae</taxon>
        <taxon>asterids</taxon>
        <taxon>Ericales</taxon>
        <taxon>Actinidiaceae</taxon>
        <taxon>Actinidia</taxon>
    </lineage>
</organism>